<organism>
    <name type="scientific">Streptococcus pneumoniae serotype 4 (strain ATCC BAA-334 / TIGR4)</name>
    <dbReference type="NCBI Taxonomy" id="170187"/>
    <lineage>
        <taxon>Bacteria</taxon>
        <taxon>Bacillati</taxon>
        <taxon>Bacillota</taxon>
        <taxon>Bacilli</taxon>
        <taxon>Lactobacillales</taxon>
        <taxon>Streptococcaceae</taxon>
        <taxon>Streptococcus</taxon>
    </lineage>
</organism>
<feature type="chain" id="PRO_0000162031" description="Uncharacterized RNA methyltransferase SP_1029">
    <location>
        <begin position="1"/>
        <end position="543"/>
    </location>
</feature>
<feature type="domain" description="TRAM" evidence="1">
    <location>
        <begin position="1"/>
        <end position="59"/>
    </location>
</feature>
<feature type="active site" description="Nucleophile" evidence="2">
    <location>
        <position position="408"/>
    </location>
</feature>
<feature type="binding site" evidence="2">
    <location>
        <position position="283"/>
    </location>
    <ligand>
        <name>S-adenosyl-L-methionine</name>
        <dbReference type="ChEBI" id="CHEBI:59789"/>
    </ligand>
</feature>
<feature type="binding site" evidence="2">
    <location>
        <position position="312"/>
    </location>
    <ligand>
        <name>S-adenosyl-L-methionine</name>
        <dbReference type="ChEBI" id="CHEBI:59789"/>
    </ligand>
</feature>
<feature type="binding site" evidence="2">
    <location>
        <position position="333"/>
    </location>
    <ligand>
        <name>S-adenosyl-L-methionine</name>
        <dbReference type="ChEBI" id="CHEBI:59789"/>
    </ligand>
</feature>
<feature type="binding site" evidence="2">
    <location>
        <position position="381"/>
    </location>
    <ligand>
        <name>S-adenosyl-L-methionine</name>
        <dbReference type="ChEBI" id="CHEBI:59789"/>
    </ligand>
</feature>
<feature type="strand" evidence="3">
    <location>
        <begin position="7"/>
        <end position="11"/>
    </location>
</feature>
<feature type="strand" evidence="3">
    <location>
        <begin position="21"/>
        <end position="25"/>
    </location>
</feature>
<feature type="strand" evidence="3">
    <location>
        <begin position="28"/>
        <end position="32"/>
    </location>
</feature>
<feature type="strand" evidence="3">
    <location>
        <begin position="40"/>
        <end position="48"/>
    </location>
</feature>
<feature type="strand" evidence="3">
    <location>
        <begin position="50"/>
        <end position="62"/>
    </location>
</feature>
<feature type="strand" evidence="6">
    <location>
        <begin position="65"/>
        <end position="67"/>
    </location>
</feature>
<feature type="helix" evidence="3">
    <location>
        <begin position="74"/>
        <end position="77"/>
    </location>
</feature>
<feature type="turn" evidence="6">
    <location>
        <begin position="78"/>
        <end position="80"/>
    </location>
</feature>
<feature type="turn" evidence="3">
    <location>
        <begin position="82"/>
        <end position="85"/>
    </location>
</feature>
<feature type="helix" evidence="3">
    <location>
        <begin position="88"/>
        <end position="107"/>
    </location>
</feature>
<feature type="strand" evidence="5">
    <location>
        <begin position="111"/>
        <end position="114"/>
    </location>
</feature>
<feature type="strand" evidence="3">
    <location>
        <begin position="127"/>
        <end position="137"/>
    </location>
</feature>
<feature type="strand" evidence="3">
    <location>
        <begin position="140"/>
        <end position="146"/>
    </location>
</feature>
<feature type="strand" evidence="3">
    <location>
        <begin position="153"/>
        <end position="155"/>
    </location>
</feature>
<feature type="strand" evidence="3">
    <location>
        <begin position="160"/>
        <end position="162"/>
    </location>
</feature>
<feature type="helix" evidence="3">
    <location>
        <begin position="164"/>
        <end position="179"/>
    </location>
</feature>
<feature type="strand" evidence="4">
    <location>
        <begin position="184"/>
        <end position="186"/>
    </location>
</feature>
<feature type="turn" evidence="3">
    <location>
        <begin position="187"/>
        <end position="190"/>
    </location>
</feature>
<feature type="strand" evidence="3">
    <location>
        <begin position="193"/>
        <end position="201"/>
    </location>
</feature>
<feature type="turn" evidence="3">
    <location>
        <begin position="203"/>
        <end position="205"/>
    </location>
</feature>
<feature type="strand" evidence="3">
    <location>
        <begin position="208"/>
        <end position="217"/>
    </location>
</feature>
<feature type="helix" evidence="3">
    <location>
        <begin position="222"/>
        <end position="232"/>
    </location>
</feature>
<feature type="strand" evidence="3">
    <location>
        <begin position="236"/>
        <end position="243"/>
    </location>
</feature>
<feature type="strand" evidence="3">
    <location>
        <begin position="246"/>
        <end position="249"/>
    </location>
</feature>
<feature type="strand" evidence="3">
    <location>
        <begin position="254"/>
        <end position="261"/>
    </location>
</feature>
<feature type="strand" evidence="3">
    <location>
        <begin position="263"/>
        <end position="269"/>
    </location>
</feature>
<feature type="strand" evidence="3">
    <location>
        <begin position="272"/>
        <end position="277"/>
    </location>
</feature>
<feature type="strand" evidence="5">
    <location>
        <begin position="278"/>
        <end position="280"/>
    </location>
</feature>
<feature type="helix" evidence="3">
    <location>
        <begin position="286"/>
        <end position="300"/>
    </location>
</feature>
<feature type="strand" evidence="3">
    <location>
        <begin position="307"/>
        <end position="312"/>
    </location>
</feature>
<feature type="turn" evidence="7">
    <location>
        <begin position="314"/>
        <end position="316"/>
    </location>
</feature>
<feature type="helix" evidence="3">
    <location>
        <begin position="317"/>
        <end position="322"/>
    </location>
</feature>
<feature type="helix" evidence="3">
    <location>
        <begin position="323"/>
        <end position="325"/>
    </location>
</feature>
<feature type="strand" evidence="3">
    <location>
        <begin position="326"/>
        <end position="334"/>
    </location>
</feature>
<feature type="helix" evidence="3">
    <location>
        <begin position="336"/>
        <end position="348"/>
    </location>
</feature>
<feature type="strand" evidence="3">
    <location>
        <begin position="353"/>
        <end position="359"/>
    </location>
</feature>
<feature type="helix" evidence="3">
    <location>
        <begin position="361"/>
        <end position="370"/>
    </location>
</feature>
<feature type="strand" evidence="3">
    <location>
        <begin position="377"/>
        <end position="380"/>
    </location>
</feature>
<feature type="helix" evidence="3">
    <location>
        <begin position="389"/>
        <end position="397"/>
    </location>
</feature>
<feature type="strand" evidence="3">
    <location>
        <begin position="401"/>
        <end position="408"/>
    </location>
</feature>
<feature type="helix" evidence="3">
    <location>
        <begin position="410"/>
        <end position="422"/>
    </location>
</feature>
<feature type="strand" evidence="3">
    <location>
        <begin position="426"/>
        <end position="433"/>
    </location>
</feature>
<feature type="strand" evidence="3">
    <location>
        <begin position="443"/>
        <end position="449"/>
    </location>
</feature>
<evidence type="ECO:0000255" key="1">
    <source>
        <dbReference type="PROSITE-ProRule" id="PRU00208"/>
    </source>
</evidence>
<evidence type="ECO:0000255" key="2">
    <source>
        <dbReference type="PROSITE-ProRule" id="PRU01024"/>
    </source>
</evidence>
<evidence type="ECO:0007829" key="3">
    <source>
        <dbReference type="PDB" id="5XJ1"/>
    </source>
</evidence>
<evidence type="ECO:0007829" key="4">
    <source>
        <dbReference type="PDB" id="5XJ2"/>
    </source>
</evidence>
<evidence type="ECO:0007829" key="5">
    <source>
        <dbReference type="PDB" id="5ZQ1"/>
    </source>
</evidence>
<evidence type="ECO:0007829" key="6">
    <source>
        <dbReference type="PDB" id="5ZQ8"/>
    </source>
</evidence>
<evidence type="ECO:0007829" key="7">
    <source>
        <dbReference type="PDB" id="5ZTH"/>
    </source>
</evidence>
<dbReference type="EC" id="2.1.1.-"/>
<dbReference type="EMBL" id="AE005672">
    <property type="protein sequence ID" value="AAK75144.1"/>
    <property type="molecule type" value="Genomic_DNA"/>
</dbReference>
<dbReference type="PIR" id="G95118">
    <property type="entry name" value="G95118"/>
</dbReference>
<dbReference type="RefSeq" id="WP_000914584.1">
    <property type="nucleotide sequence ID" value="NC_003028.3"/>
</dbReference>
<dbReference type="PDB" id="5XJ1">
    <property type="method" value="X-ray"/>
    <property type="resolution" value="1.75 A"/>
    <property type="chains" value="A=1-454"/>
</dbReference>
<dbReference type="PDB" id="5XJ2">
    <property type="method" value="X-ray"/>
    <property type="resolution" value="2.84 A"/>
    <property type="chains" value="A/B/C/D=1-454"/>
</dbReference>
<dbReference type="PDB" id="5ZQ0">
    <property type="method" value="X-ray"/>
    <property type="resolution" value="2.00 A"/>
    <property type="chains" value="A=1-452"/>
</dbReference>
<dbReference type="PDB" id="5ZQ1">
    <property type="method" value="X-ray"/>
    <property type="resolution" value="3.10 A"/>
    <property type="chains" value="A=1-452"/>
</dbReference>
<dbReference type="PDB" id="5ZQ8">
    <property type="method" value="X-ray"/>
    <property type="resolution" value="2.18 A"/>
    <property type="chains" value="A/B=1-454"/>
</dbReference>
<dbReference type="PDB" id="5ZTH">
    <property type="method" value="X-ray"/>
    <property type="resolution" value="3.24 A"/>
    <property type="chains" value="A=1-452"/>
</dbReference>
<dbReference type="PDBsum" id="5XJ1"/>
<dbReference type="PDBsum" id="5XJ2"/>
<dbReference type="PDBsum" id="5ZQ0"/>
<dbReference type="PDBsum" id="5ZQ1"/>
<dbReference type="PDBsum" id="5ZQ8"/>
<dbReference type="PDBsum" id="5ZTH"/>
<dbReference type="SMR" id="Q97R12"/>
<dbReference type="PaxDb" id="170187-SP_1029"/>
<dbReference type="EnsemblBacteria" id="AAK75144">
    <property type="protein sequence ID" value="AAK75144"/>
    <property type="gene ID" value="SP_1029"/>
</dbReference>
<dbReference type="KEGG" id="spn:SP_1029"/>
<dbReference type="eggNOG" id="COG2265">
    <property type="taxonomic scope" value="Bacteria"/>
</dbReference>
<dbReference type="PhylomeDB" id="Q97R12"/>
<dbReference type="BioCyc" id="SPNE170187:G1FZB-1058-MONOMER"/>
<dbReference type="BRENDA" id="2.1.1.189">
    <property type="organism ID" value="1960"/>
</dbReference>
<dbReference type="BRENDA" id="2.1.1.190">
    <property type="organism ID" value="1960"/>
</dbReference>
<dbReference type="Proteomes" id="UP000000585">
    <property type="component" value="Chromosome"/>
</dbReference>
<dbReference type="GO" id="GO:0070041">
    <property type="term" value="F:rRNA (uridine-C5-)-methyltransferase activity"/>
    <property type="evidence" value="ECO:0007669"/>
    <property type="project" value="TreeGrafter"/>
</dbReference>
<dbReference type="GO" id="GO:0070475">
    <property type="term" value="P:rRNA base methylation"/>
    <property type="evidence" value="ECO:0007669"/>
    <property type="project" value="TreeGrafter"/>
</dbReference>
<dbReference type="CDD" id="cd02440">
    <property type="entry name" value="AdoMet_MTases"/>
    <property type="match status" value="1"/>
</dbReference>
<dbReference type="FunFam" id="3.40.50.150:FF:000009">
    <property type="entry name" value="23S rRNA (Uracil(1939)-C(5))-methyltransferase RlmD"/>
    <property type="match status" value="1"/>
</dbReference>
<dbReference type="FunFam" id="2.40.50.1070:FF:000003">
    <property type="entry name" value="23S rRNA (Uracil-5-)-methyltransferase RumA"/>
    <property type="match status" value="1"/>
</dbReference>
<dbReference type="Gene3D" id="2.40.50.1070">
    <property type="match status" value="1"/>
</dbReference>
<dbReference type="Gene3D" id="2.40.50.140">
    <property type="entry name" value="Nucleic acid-binding proteins"/>
    <property type="match status" value="1"/>
</dbReference>
<dbReference type="Gene3D" id="3.40.50.150">
    <property type="entry name" value="Vaccinia Virus protein VP39"/>
    <property type="match status" value="1"/>
</dbReference>
<dbReference type="InterPro" id="IPR030390">
    <property type="entry name" value="MeTrfase_TrmA_AS"/>
</dbReference>
<dbReference type="InterPro" id="IPR030391">
    <property type="entry name" value="MeTrfase_TrmA_CS"/>
</dbReference>
<dbReference type="InterPro" id="IPR012340">
    <property type="entry name" value="NA-bd_OB-fold"/>
</dbReference>
<dbReference type="InterPro" id="IPR029063">
    <property type="entry name" value="SAM-dependent_MTases_sf"/>
</dbReference>
<dbReference type="InterPro" id="IPR002792">
    <property type="entry name" value="TRAM_dom"/>
</dbReference>
<dbReference type="InterPro" id="IPR010280">
    <property type="entry name" value="U5_MeTrfase_fam"/>
</dbReference>
<dbReference type="NCBIfam" id="TIGR00479">
    <property type="entry name" value="rumA"/>
    <property type="match status" value="1"/>
</dbReference>
<dbReference type="PANTHER" id="PTHR11061">
    <property type="entry name" value="RNA M5U METHYLTRANSFERASE"/>
    <property type="match status" value="1"/>
</dbReference>
<dbReference type="PANTHER" id="PTHR11061:SF30">
    <property type="entry name" value="TRNA (URACIL(54)-C(5))-METHYLTRANSFERASE"/>
    <property type="match status" value="1"/>
</dbReference>
<dbReference type="Pfam" id="PF01938">
    <property type="entry name" value="TRAM"/>
    <property type="match status" value="1"/>
</dbReference>
<dbReference type="Pfam" id="PF05958">
    <property type="entry name" value="tRNA_U5-meth_tr"/>
    <property type="match status" value="1"/>
</dbReference>
<dbReference type="SUPFAM" id="SSF50249">
    <property type="entry name" value="Nucleic acid-binding proteins"/>
    <property type="match status" value="1"/>
</dbReference>
<dbReference type="SUPFAM" id="SSF53335">
    <property type="entry name" value="S-adenosyl-L-methionine-dependent methyltransferases"/>
    <property type="match status" value="1"/>
</dbReference>
<dbReference type="PROSITE" id="PS51687">
    <property type="entry name" value="SAM_MT_RNA_M5U"/>
    <property type="match status" value="1"/>
</dbReference>
<dbReference type="PROSITE" id="PS50926">
    <property type="entry name" value="TRAM"/>
    <property type="match status" value="1"/>
</dbReference>
<dbReference type="PROSITE" id="PS01230">
    <property type="entry name" value="TRMA_1"/>
    <property type="match status" value="1"/>
</dbReference>
<dbReference type="PROSITE" id="PS01231">
    <property type="entry name" value="TRMA_2"/>
    <property type="match status" value="1"/>
</dbReference>
<proteinExistence type="evidence at protein level"/>
<gene>
    <name type="ordered locus">SP_1029</name>
</gene>
<accession>Q97R12</accession>
<name>Y1029_STRPN</name>
<protein>
    <recommendedName>
        <fullName>Uncharacterized RNA methyltransferase SP_1029</fullName>
        <ecNumber>2.1.1.-</ecNumber>
    </recommendedName>
</protein>
<sequence>MLKKNDIVEVEIVDLTHEGAGVAKVDGLVFFVENALPSEKILMRVLKVNKKIGFGKVEKYLVQSPHRNQDLDLAYLRSGIADLGHLSYPEQLKFKTKQVKDSLYKIAGIADVEVAETLGMEHPVKYRNKAQVPVRRVNGVLETGFFRKNSHNLMPLEDFFIQDPVIDQVVVALRDLLRRFDLKPYDEKEQSGLIRNLVVRRGHYSGQIMVVLVTTRPKVFRVDQLIEQVIKQFPEIVSVMQNINDQNTNAIFGKEWRTLYGQDYITDQMLGNDFQIAGPAFYQVNTEMAEKLYQTAIDFAELKKDDVIIDAYSGIGTIGLSVAKHVKEVYGVELIPEAVENSQKNASLNKITNAHYVCDTAENAMKKWLKEGIQPTVILVDPPRKGLTESFIKASAQTGADRIAYISCNVATMARDIKLYQELGYELKKVQPVDLFPQTHHVETVALLSKLDVDKHISVEIELDEMDLTSAESKATYAQIKEYVWNKFELKVSTLYIAQIKKKCGIELREHYNKSKKDKQIIPQCTPEKEEAIMDALRHFKMI</sequence>
<keyword id="KW-0002">3D-structure</keyword>
<keyword id="KW-0489">Methyltransferase</keyword>
<keyword id="KW-1185">Reference proteome</keyword>
<keyword id="KW-0949">S-adenosyl-L-methionine</keyword>
<keyword id="KW-0808">Transferase</keyword>
<comment type="similarity">
    <text evidence="2">Belongs to the class I-like SAM-binding methyltransferase superfamily. RNA M5U methyltransferase family.</text>
</comment>
<reference key="1">
    <citation type="journal article" date="2001" name="Science">
        <title>Complete genome sequence of a virulent isolate of Streptococcus pneumoniae.</title>
        <authorList>
            <person name="Tettelin H."/>
            <person name="Nelson K.E."/>
            <person name="Paulsen I.T."/>
            <person name="Eisen J.A."/>
            <person name="Read T.D."/>
            <person name="Peterson S.N."/>
            <person name="Heidelberg J.F."/>
            <person name="DeBoy R.T."/>
            <person name="Haft D.H."/>
            <person name="Dodson R.J."/>
            <person name="Durkin A.S."/>
            <person name="Gwinn M.L."/>
            <person name="Kolonay J.F."/>
            <person name="Nelson W.C."/>
            <person name="Peterson J.D."/>
            <person name="Umayam L.A."/>
            <person name="White O."/>
            <person name="Salzberg S.L."/>
            <person name="Lewis M.R."/>
            <person name="Radune D."/>
            <person name="Holtzapple E.K."/>
            <person name="Khouri H.M."/>
            <person name="Wolf A.M."/>
            <person name="Utterback T.R."/>
            <person name="Hansen C.L."/>
            <person name="McDonald L.A."/>
            <person name="Feldblyum T.V."/>
            <person name="Angiuoli S.V."/>
            <person name="Dickinson T."/>
            <person name="Hickey E.K."/>
            <person name="Holt I.E."/>
            <person name="Loftus B.J."/>
            <person name="Yang F."/>
            <person name="Smith H.O."/>
            <person name="Venter J.C."/>
            <person name="Dougherty B.A."/>
            <person name="Morrison D.A."/>
            <person name="Hollingshead S.K."/>
            <person name="Fraser C.M."/>
        </authorList>
    </citation>
    <scope>NUCLEOTIDE SEQUENCE [LARGE SCALE GENOMIC DNA]</scope>
    <source>
        <strain>ATCC BAA-334 / TIGR4</strain>
    </source>
</reference>